<dbReference type="EMBL" id="X54192">
    <property type="protein sequence ID" value="CAA38110.1"/>
    <property type="status" value="ALT_FRAME"/>
    <property type="molecule type" value="Genomic_DNA"/>
</dbReference>
<dbReference type="EMBL" id="AY987390">
    <property type="protein sequence ID" value="AAX85990.1"/>
    <property type="molecule type" value="mRNA"/>
</dbReference>
<dbReference type="EMBL" id="AP005511">
    <property type="protein sequence ID" value="BAD19800.1"/>
    <property type="molecule type" value="Genomic_DNA"/>
</dbReference>
<dbReference type="EMBL" id="AP014958">
    <property type="protein sequence ID" value="BAS77902.1"/>
    <property type="molecule type" value="Genomic_DNA"/>
</dbReference>
<dbReference type="PIR" id="S17763">
    <property type="entry name" value="S17763"/>
</dbReference>
<dbReference type="RefSeq" id="XP_015627549.1">
    <property type="nucleotide sequence ID" value="XM_015772063.1"/>
</dbReference>
<dbReference type="SMR" id="Q02897"/>
<dbReference type="FunCoup" id="Q02897">
    <property type="interactions" value="2006"/>
</dbReference>
<dbReference type="STRING" id="39947.Q02897"/>
<dbReference type="PaxDb" id="39947-Q02897"/>
<dbReference type="EnsemblPlants" id="Os02t0249600-01">
    <property type="protein sequence ID" value="Os02t0249600-01"/>
    <property type="gene ID" value="Os02g0249600"/>
</dbReference>
<dbReference type="Gramene" id="Os02t0249600-01">
    <property type="protein sequence ID" value="Os02t0249600-01"/>
    <property type="gene ID" value="Os02g0249600"/>
</dbReference>
<dbReference type="eggNOG" id="ENOG502QU1J">
    <property type="taxonomic scope" value="Eukaryota"/>
</dbReference>
<dbReference type="HOGENOM" id="CLU_026341_2_0_1"/>
<dbReference type="InParanoid" id="Q02897"/>
<dbReference type="OMA" id="AGETEFW"/>
<dbReference type="OrthoDB" id="2016041at2759"/>
<dbReference type="Proteomes" id="UP000000763">
    <property type="component" value="Chromosome 2"/>
</dbReference>
<dbReference type="Proteomes" id="UP000059680">
    <property type="component" value="Chromosome 2"/>
</dbReference>
<dbReference type="ExpressionAtlas" id="Q02897">
    <property type="expression patterns" value="baseline and differential"/>
</dbReference>
<dbReference type="GO" id="GO:0045735">
    <property type="term" value="F:nutrient reservoir activity"/>
    <property type="evidence" value="ECO:0007669"/>
    <property type="project" value="UniProtKB-KW"/>
</dbReference>
<dbReference type="GO" id="GO:0048316">
    <property type="term" value="P:seed development"/>
    <property type="evidence" value="ECO:0007669"/>
    <property type="project" value="UniProtKB-ARBA"/>
</dbReference>
<dbReference type="CDD" id="cd02243">
    <property type="entry name" value="cupin_11S_legumin_C"/>
    <property type="match status" value="1"/>
</dbReference>
<dbReference type="CDD" id="cd02242">
    <property type="entry name" value="cupin_11S_legumin_N"/>
    <property type="match status" value="1"/>
</dbReference>
<dbReference type="FunFam" id="2.60.120.10:FF:000073">
    <property type="entry name" value="Glycinin G1"/>
    <property type="match status" value="1"/>
</dbReference>
<dbReference type="Gene3D" id="2.60.120.10">
    <property type="entry name" value="Jelly Rolls"/>
    <property type="match status" value="2"/>
</dbReference>
<dbReference type="InterPro" id="IPR022379">
    <property type="entry name" value="11S_seedstore_CS"/>
</dbReference>
<dbReference type="InterPro" id="IPR006044">
    <property type="entry name" value="11S_seedstore_pln"/>
</dbReference>
<dbReference type="InterPro" id="IPR006045">
    <property type="entry name" value="Cupin_1"/>
</dbReference>
<dbReference type="InterPro" id="IPR014710">
    <property type="entry name" value="RmlC-like_jellyroll"/>
</dbReference>
<dbReference type="InterPro" id="IPR011051">
    <property type="entry name" value="RmlC_Cupin_sf"/>
</dbReference>
<dbReference type="InterPro" id="IPR050253">
    <property type="entry name" value="Seed_Storage-Functional"/>
</dbReference>
<dbReference type="PANTHER" id="PTHR31189:SF35">
    <property type="entry name" value="12S SEED STORAGE PROTEIN CRB"/>
    <property type="match status" value="1"/>
</dbReference>
<dbReference type="PANTHER" id="PTHR31189">
    <property type="entry name" value="OS03G0336100 PROTEIN-RELATED"/>
    <property type="match status" value="1"/>
</dbReference>
<dbReference type="Pfam" id="PF00190">
    <property type="entry name" value="Cupin_1"/>
    <property type="match status" value="2"/>
</dbReference>
<dbReference type="PRINTS" id="PR00439">
    <property type="entry name" value="11SGLOBULIN"/>
</dbReference>
<dbReference type="SMART" id="SM00835">
    <property type="entry name" value="Cupin_1"/>
    <property type="match status" value="2"/>
</dbReference>
<dbReference type="SUPFAM" id="SSF51182">
    <property type="entry name" value="RmlC-like cupins"/>
    <property type="match status" value="1"/>
</dbReference>
<dbReference type="PROSITE" id="PS00305">
    <property type="entry name" value="11S_SEED_STORAGE"/>
    <property type="match status" value="1"/>
</dbReference>
<proteinExistence type="evidence at transcript level"/>
<organism>
    <name type="scientific">Oryza sativa subsp. japonica</name>
    <name type="common">Rice</name>
    <dbReference type="NCBI Taxonomy" id="39947"/>
    <lineage>
        <taxon>Eukaryota</taxon>
        <taxon>Viridiplantae</taxon>
        <taxon>Streptophyta</taxon>
        <taxon>Embryophyta</taxon>
        <taxon>Tracheophyta</taxon>
        <taxon>Spermatophyta</taxon>
        <taxon>Magnoliopsida</taxon>
        <taxon>Liliopsida</taxon>
        <taxon>Poales</taxon>
        <taxon>Poaceae</taxon>
        <taxon>BOP clade</taxon>
        <taxon>Oryzoideae</taxon>
        <taxon>Oryzeae</taxon>
        <taxon>Oryzinae</taxon>
        <taxon>Oryza</taxon>
        <taxon>Oryza sativa</taxon>
    </lineage>
</organism>
<reference key="1">
    <citation type="journal article" date="1991" name="Plant Mol. Biol.">
        <title>Sequence of three members and expression of a new major subfamily of glutelin genes from rice.</title>
        <authorList>
            <person name="Takaiwa F."/>
            <person name="Oono K."/>
            <person name="Wing D."/>
            <person name="Kato A."/>
        </authorList>
    </citation>
    <scope>NUCLEOTIDE SEQUENCE [GENOMIC DNA]</scope>
    <source>
        <strain>cv. Mangetsumochi</strain>
        <tissue>Seed</tissue>
    </source>
</reference>
<reference key="2">
    <citation type="submission" date="2005-03" db="EMBL/GenBank/DDBJ databases">
        <title>A novel rice glutelin precursor gene.</title>
        <authorList>
            <person name="Wan J.M."/>
            <person name="Niu H.B."/>
            <person name="Zhai H.Q."/>
            <person name="Wang Y.H."/>
            <person name="Jiang L."/>
        </authorList>
    </citation>
    <scope>NUCLEOTIDE SEQUENCE [MRNA]</scope>
    <source>
        <tissue>Endosperm</tissue>
    </source>
</reference>
<reference key="3">
    <citation type="journal article" date="2005" name="Nature">
        <title>The map-based sequence of the rice genome.</title>
        <authorList>
            <consortium name="International rice genome sequencing project (IRGSP)"/>
        </authorList>
    </citation>
    <scope>NUCLEOTIDE SEQUENCE [LARGE SCALE GENOMIC DNA]</scope>
    <source>
        <strain>cv. Nipponbare</strain>
    </source>
</reference>
<reference key="4">
    <citation type="journal article" date="2013" name="Rice">
        <title>Improvement of the Oryza sativa Nipponbare reference genome using next generation sequence and optical map data.</title>
        <authorList>
            <person name="Kawahara Y."/>
            <person name="de la Bastide M."/>
            <person name="Hamilton J.P."/>
            <person name="Kanamori H."/>
            <person name="McCombie W.R."/>
            <person name="Ouyang S."/>
            <person name="Schwartz D.C."/>
            <person name="Tanaka T."/>
            <person name="Wu J."/>
            <person name="Zhou S."/>
            <person name="Childs K.L."/>
            <person name="Davidson R.M."/>
            <person name="Lin H."/>
            <person name="Quesada-Ocampo L."/>
            <person name="Vaillancourt B."/>
            <person name="Sakai H."/>
            <person name="Lee S.S."/>
            <person name="Kim J."/>
            <person name="Numa H."/>
            <person name="Itoh T."/>
            <person name="Buell C.R."/>
            <person name="Matsumoto T."/>
        </authorList>
    </citation>
    <scope>GENOME REANNOTATION</scope>
    <source>
        <strain>cv. Nipponbare</strain>
    </source>
</reference>
<evidence type="ECO:0000250" key="1"/>
<evidence type="ECO:0000255" key="2"/>
<evidence type="ECO:0000256" key="3">
    <source>
        <dbReference type="SAM" id="MobiDB-lite"/>
    </source>
</evidence>
<evidence type="ECO:0000305" key="4"/>
<feature type="signal peptide" evidence="2">
    <location>
        <begin position="1"/>
        <end position="24"/>
    </location>
</feature>
<feature type="chain" id="PRO_0000032058" description="Glutelin type-B 2 acidic chain" evidence="1">
    <location>
        <begin position="25"/>
        <end position="298"/>
    </location>
</feature>
<feature type="chain" id="PRO_0000032059" description="Glutelin type-B 2 basic chain" evidence="1">
    <location>
        <begin position="299"/>
        <end position="495"/>
    </location>
</feature>
<feature type="domain" description="Cupin type-1 1" evidence="2">
    <location>
        <begin position="50"/>
        <end position="245"/>
    </location>
</feature>
<feature type="domain" description="Cupin type-1 2" evidence="2">
    <location>
        <begin position="311"/>
        <end position="460"/>
    </location>
</feature>
<feature type="region of interest" description="Disordered" evidence="3">
    <location>
        <begin position="464"/>
        <end position="495"/>
    </location>
</feature>
<feature type="disulfide bond" evidence="1">
    <location>
        <begin position="45"/>
        <end position="78"/>
    </location>
</feature>
<feature type="disulfide bond" description="Interchain (between acidic and basic chains)" evidence="2">
    <location>
        <begin position="121"/>
        <end position="305"/>
    </location>
</feature>
<feature type="sequence conflict" description="In Ref. 2; AAX85990." evidence="4" ref="2">
    <original>R</original>
    <variation>K</variation>
    <location>
        <position position="43"/>
    </location>
</feature>
<feature type="sequence conflict" description="In Ref. 1; CAA38110." evidence="4" ref="1">
    <original>S</original>
    <variation>D</variation>
    <location>
        <position position="346"/>
    </location>
</feature>
<feature type="sequence conflict" description="In Ref. 1; CAA38110." evidence="4" ref="1">
    <original>R</original>
    <variation>H</variation>
    <location>
        <position position="414"/>
    </location>
</feature>
<keyword id="KW-1015">Disulfide bond</keyword>
<keyword id="KW-1185">Reference proteome</keyword>
<keyword id="KW-0708">Seed storage protein</keyword>
<keyword id="KW-0732">Signal</keyword>
<keyword id="KW-0758">Storage protein</keyword>
<sequence>MATTIFSRFSIYFCAMLLCQGSMAQLFNPSTNPWHSPRQGSFRECRFDRLQAFEPLRKVRSEAGVTEYFDEKNELFQCTGTFVIRRVIQPQGLLVPRYSNTPGLVYIIQGRGSMGLTFPGCPATYQQQFQQFSSQGQSQSQKFRDEHQKIHQFRQGDVVALPAGVAHWFYNDGDASVVAIYVYDINNSANQLEPRQKEFLLAGNNNRVQQVYGSSIEQHSSQNIFNGFGTELLSEALGINTVAAKRLQSQNDQRGEIVHVKNGLQLLKPTLTQQQEQAQAQYQEVQYSEQQQTSSRWNGLEENFCTIKARVNIENPSRADSYNPRAGRISSVNSQKFPILNLIQMSATRVNLYQNAILSPFWNVNAHSLVYMIQGQSRVQVVSNFGKTVFDGVLRPGQLLIIPQHYAVLKKAEREGCQYIAIKTNANAFVSHLAGKNSVFRALPVDVVANAYRISREQARSIKNNRGEEHGAFTPRFQQQYYPGFSNESESETSE</sequence>
<accession>Q02897</accession>
<accession>Q52PJ1</accession>
<accession>Q6K504</accession>
<name>GLUB2_ORYSJ</name>
<protein>
    <recommendedName>
        <fullName>Glutelin type-B 2</fullName>
    </recommendedName>
    <alternativeName>
        <fullName>Glutelin type-B 7</fullName>
    </alternativeName>
    <component>
        <recommendedName>
            <fullName>Glutelin type-B 2 acidic chain</fullName>
        </recommendedName>
    </component>
    <component>
        <recommendedName>
            <fullName>Glutelin type-B 2 basic chain</fullName>
        </recommendedName>
    </component>
</protein>
<comment type="function">
    <text>Seed storage protein.</text>
</comment>
<comment type="subunit">
    <text>Hexamer; each subunit is composed of an acidic and a basic chain derived from a single precursor and linked by a disulfide bond.</text>
</comment>
<comment type="developmental stage">
    <text>It begins to accumulate 6 days after flowering and reaches a maximum level at 14 days.</text>
</comment>
<comment type="similarity">
    <text evidence="4">Belongs to the 11S seed storage protein (globulins) family.</text>
</comment>
<comment type="sequence caution" evidence="4">
    <conflict type="frameshift">
        <sequence resource="EMBL-CDS" id="CAA38110"/>
    </conflict>
</comment>
<gene>
    <name type="primary">GLUB2</name>
    <name type="synonym">GLUB-2</name>
    <name type="synonym">GluB-7</name>
    <name type="synonym">GLUB7</name>
    <name type="ordered locus">Os02g0249600</name>
    <name type="ordered locus">LOC_Os02g15150</name>
    <name type="ORF">OSJNBa0011N12.30</name>
</gene>